<protein>
    <recommendedName>
        <fullName>Superoxide dismutase [Fe]</fullName>
        <ecNumber>1.15.1.1</ecNumber>
    </recommendedName>
    <alternativeName>
        <fullName>FeSOD</fullName>
    </alternativeName>
</protein>
<keyword id="KW-0002">3D-structure</keyword>
<keyword id="KW-0963">Cytoplasm</keyword>
<keyword id="KW-0903">Direct protein sequencing</keyword>
<keyword id="KW-0408">Iron</keyword>
<keyword id="KW-0479">Metal-binding</keyword>
<keyword id="KW-0560">Oxidoreductase</keyword>
<proteinExistence type="evidence at protein level"/>
<evidence type="ECO:0000250" key="1"/>
<evidence type="ECO:0000269" key="2">
    <source>
    </source>
</evidence>
<evidence type="ECO:0000305" key="3"/>
<evidence type="ECO:0007829" key="4">
    <source>
        <dbReference type="PDB" id="2GOJ"/>
    </source>
</evidence>
<organism>
    <name type="scientific">Plasmodium falciparum (isolate HB3)</name>
    <dbReference type="NCBI Taxonomy" id="137071"/>
    <lineage>
        <taxon>Eukaryota</taxon>
        <taxon>Sar</taxon>
        <taxon>Alveolata</taxon>
        <taxon>Apicomplexa</taxon>
        <taxon>Aconoidasida</taxon>
        <taxon>Haemosporida</taxon>
        <taxon>Plasmodiidae</taxon>
        <taxon>Plasmodium</taxon>
        <taxon>Plasmodium (Laverania)</taxon>
    </lineage>
</organism>
<accession>Q27740</accession>
<gene>
    <name type="primary">SODB</name>
</gene>
<dbReference type="EC" id="1.15.1.1"/>
<dbReference type="EMBL" id="Z49819">
    <property type="protein sequence ID" value="CAA89971.1"/>
    <property type="molecule type" value="mRNA"/>
</dbReference>
<dbReference type="PIR" id="S55499">
    <property type="entry name" value="S55499"/>
</dbReference>
<dbReference type="PDB" id="2GOJ">
    <property type="method" value="X-ray"/>
    <property type="resolution" value="2.00 A"/>
    <property type="chains" value="A/B=2-198"/>
</dbReference>
<dbReference type="PDBsum" id="2GOJ"/>
<dbReference type="SMR" id="Q27740"/>
<dbReference type="EvolutionaryTrace" id="Q27740"/>
<dbReference type="GO" id="GO:0005737">
    <property type="term" value="C:cytoplasm"/>
    <property type="evidence" value="ECO:0007669"/>
    <property type="project" value="UniProtKB-SubCell"/>
</dbReference>
<dbReference type="GO" id="GO:0046872">
    <property type="term" value="F:metal ion binding"/>
    <property type="evidence" value="ECO:0007669"/>
    <property type="project" value="UniProtKB-KW"/>
</dbReference>
<dbReference type="GO" id="GO:0004784">
    <property type="term" value="F:superoxide dismutase activity"/>
    <property type="evidence" value="ECO:0007669"/>
    <property type="project" value="UniProtKB-EC"/>
</dbReference>
<dbReference type="FunFam" id="1.10.287.990:FF:000002">
    <property type="entry name" value="Superoxide dismutase"/>
    <property type="match status" value="1"/>
</dbReference>
<dbReference type="FunFam" id="3.55.40.20:FF:000001">
    <property type="entry name" value="Superoxide dismutase"/>
    <property type="match status" value="1"/>
</dbReference>
<dbReference type="Gene3D" id="1.10.287.990">
    <property type="entry name" value="Fe,Mn superoxide dismutase (SOD) domain"/>
    <property type="match status" value="1"/>
</dbReference>
<dbReference type="Gene3D" id="3.55.40.20">
    <property type="entry name" value="Iron/manganese superoxide dismutase, C-terminal domain"/>
    <property type="match status" value="1"/>
</dbReference>
<dbReference type="InterPro" id="IPR001189">
    <property type="entry name" value="Mn/Fe_SOD"/>
</dbReference>
<dbReference type="InterPro" id="IPR019833">
    <property type="entry name" value="Mn/Fe_SOD_BS"/>
</dbReference>
<dbReference type="InterPro" id="IPR019832">
    <property type="entry name" value="Mn/Fe_SOD_C"/>
</dbReference>
<dbReference type="InterPro" id="IPR019831">
    <property type="entry name" value="Mn/Fe_SOD_N"/>
</dbReference>
<dbReference type="InterPro" id="IPR036324">
    <property type="entry name" value="Mn/Fe_SOD_N_sf"/>
</dbReference>
<dbReference type="InterPro" id="IPR036314">
    <property type="entry name" value="SOD_C_sf"/>
</dbReference>
<dbReference type="PANTHER" id="PTHR42769">
    <property type="entry name" value="SUPEROXIDE DISMUTASE"/>
    <property type="match status" value="1"/>
</dbReference>
<dbReference type="PANTHER" id="PTHR42769:SF3">
    <property type="entry name" value="SUPEROXIDE DISMUTASE [FE] 2, CHLOROPLASTIC"/>
    <property type="match status" value="1"/>
</dbReference>
<dbReference type="Pfam" id="PF02777">
    <property type="entry name" value="Sod_Fe_C"/>
    <property type="match status" value="1"/>
</dbReference>
<dbReference type="Pfam" id="PF00081">
    <property type="entry name" value="Sod_Fe_N"/>
    <property type="match status" value="1"/>
</dbReference>
<dbReference type="PIRSF" id="PIRSF000349">
    <property type="entry name" value="SODismutase"/>
    <property type="match status" value="1"/>
</dbReference>
<dbReference type="PRINTS" id="PR01703">
    <property type="entry name" value="MNSODISMTASE"/>
</dbReference>
<dbReference type="SUPFAM" id="SSF54719">
    <property type="entry name" value="Fe,Mn superoxide dismutase (SOD), C-terminal domain"/>
    <property type="match status" value="1"/>
</dbReference>
<dbReference type="SUPFAM" id="SSF46609">
    <property type="entry name" value="Fe,Mn superoxide dismutase (SOD), N-terminal domain"/>
    <property type="match status" value="1"/>
</dbReference>
<dbReference type="PROSITE" id="PS00088">
    <property type="entry name" value="SOD_MN"/>
    <property type="match status" value="1"/>
</dbReference>
<name>SODF_PLAFX</name>
<comment type="function">
    <text>Destroys superoxide anion radicals which are normally produced within the cells and which are toxic to biological systems.</text>
</comment>
<comment type="catalytic activity">
    <reaction evidence="2">
        <text>2 superoxide + 2 H(+) = H2O2 + O2</text>
        <dbReference type="Rhea" id="RHEA:20696"/>
        <dbReference type="ChEBI" id="CHEBI:15378"/>
        <dbReference type="ChEBI" id="CHEBI:15379"/>
        <dbReference type="ChEBI" id="CHEBI:16240"/>
        <dbReference type="ChEBI" id="CHEBI:18421"/>
        <dbReference type="EC" id="1.15.1.1"/>
    </reaction>
</comment>
<comment type="cofactor">
    <cofactor evidence="1">
        <name>Fe cation</name>
        <dbReference type="ChEBI" id="CHEBI:24875"/>
    </cofactor>
    <text evidence="1">Binds 1 Fe cation per subunit.</text>
</comment>
<comment type="subunit">
    <text evidence="2">Homodimer.</text>
</comment>
<comment type="subcellular location">
    <subcellularLocation>
        <location evidence="3">Cytoplasm</location>
    </subcellularLocation>
</comment>
<comment type="similarity">
    <text evidence="3">Belongs to the iron/manganese superoxide dismutase family.</text>
</comment>
<sequence>MVITLPKLKYALNALSPHISEETLNFHYNKHHAGYVNKLNTLIKDTPFAEKSLLDIVKESSGAIFNNAAQIWNHTFYWDSMGPDCGGEPHGEIKEKIQEDFGSFNNFKEQFSNILCGHFGSGWGWLALNNNNKLVILQTHDAGNPIKDNTGIPILTCDIWEHAYYIDYRNDRASYVKAWWNLVNWNFANENLKKAMKK</sequence>
<feature type="chain" id="PRO_0000290112" description="Superoxide dismutase [Fe]">
    <location>
        <begin position="1"/>
        <end position="198"/>
    </location>
</feature>
<feature type="binding site" evidence="1">
    <location>
        <position position="27"/>
    </location>
    <ligand>
        <name>Fe cation</name>
        <dbReference type="ChEBI" id="CHEBI:24875"/>
    </ligand>
</feature>
<feature type="binding site" evidence="1">
    <location>
        <position position="74"/>
    </location>
    <ligand>
        <name>Fe cation</name>
        <dbReference type="ChEBI" id="CHEBI:24875"/>
    </ligand>
</feature>
<feature type="binding site" evidence="1">
    <location>
        <position position="158"/>
    </location>
    <ligand>
        <name>Fe cation</name>
        <dbReference type="ChEBI" id="CHEBI:24875"/>
    </ligand>
</feature>
<feature type="binding site" evidence="1">
    <location>
        <position position="162"/>
    </location>
    <ligand>
        <name>Fe cation</name>
        <dbReference type="ChEBI" id="CHEBI:24875"/>
    </ligand>
</feature>
<feature type="turn" evidence="4">
    <location>
        <begin position="12"/>
        <end position="18"/>
    </location>
</feature>
<feature type="helix" evidence="4">
    <location>
        <begin position="21"/>
        <end position="29"/>
    </location>
</feature>
<feature type="helix" evidence="4">
    <location>
        <begin position="31"/>
        <end position="43"/>
    </location>
</feature>
<feature type="turn" evidence="4">
    <location>
        <begin position="47"/>
        <end position="50"/>
    </location>
</feature>
<feature type="helix" evidence="4">
    <location>
        <begin position="53"/>
        <end position="59"/>
    </location>
</feature>
<feature type="helix" evidence="4">
    <location>
        <begin position="62"/>
        <end position="79"/>
    </location>
</feature>
<feature type="helix" evidence="4">
    <location>
        <begin position="92"/>
        <end position="101"/>
    </location>
</feature>
<feature type="helix" evidence="4">
    <location>
        <begin position="104"/>
        <end position="117"/>
    </location>
</feature>
<feature type="strand" evidence="4">
    <location>
        <begin position="120"/>
        <end position="128"/>
    </location>
</feature>
<feature type="strand" evidence="4">
    <location>
        <begin position="134"/>
        <end position="140"/>
    </location>
</feature>
<feature type="turn" evidence="4">
    <location>
        <begin position="145"/>
        <end position="149"/>
    </location>
</feature>
<feature type="strand" evidence="4">
    <location>
        <begin position="152"/>
        <end position="158"/>
    </location>
</feature>
<feature type="helix" evidence="4">
    <location>
        <begin position="161"/>
        <end position="163"/>
    </location>
</feature>
<feature type="helix" evidence="4">
    <location>
        <begin position="165"/>
        <end position="168"/>
    </location>
</feature>
<feature type="helix" evidence="4">
    <location>
        <begin position="172"/>
        <end position="179"/>
    </location>
</feature>
<feature type="turn" evidence="4">
    <location>
        <begin position="180"/>
        <end position="182"/>
    </location>
</feature>
<feature type="helix" evidence="4">
    <location>
        <begin position="185"/>
        <end position="196"/>
    </location>
</feature>
<reference key="1">
    <citation type="journal article" date="1996" name="Mol. Biochem. Parasitol.">
        <title>Characterization of iron-dependent endogenous superoxide dismutase of Plasmodium falciparum.</title>
        <authorList>
            <person name="Becuwe P."/>
            <person name="Gratepanche S."/>
            <person name="Fourmaux M.-N."/>
            <person name="Van Beeumen J."/>
            <person name="Samyn B."/>
            <person name="Mercereau-Puijalon O."/>
            <person name="Touzel J.P."/>
            <person name="Slomianny C."/>
            <person name="Camus D."/>
            <person name="Dive D."/>
        </authorList>
    </citation>
    <scope>NUCLEOTIDE SEQUENCE [MRNA]</scope>
    <scope>PROTEIN SEQUENCE OF 1-30</scope>
    <scope>CATALYTIC ACTIVITY</scope>
    <scope>SUBUNIT</scope>
</reference>